<proteinExistence type="inferred from homology"/>
<name>BIOB2_CORDI</name>
<gene>
    <name evidence="1" type="primary">bioB2</name>
    <name type="ordered locus">DIP1124</name>
</gene>
<reference key="1">
    <citation type="journal article" date="2003" name="Nucleic Acids Res.">
        <title>The complete genome sequence and analysis of Corynebacterium diphtheriae NCTC13129.</title>
        <authorList>
            <person name="Cerdeno-Tarraga A.-M."/>
            <person name="Efstratiou A."/>
            <person name="Dover L.G."/>
            <person name="Holden M.T.G."/>
            <person name="Pallen M.J."/>
            <person name="Bentley S.D."/>
            <person name="Besra G.S."/>
            <person name="Churcher C.M."/>
            <person name="James K.D."/>
            <person name="De Zoysa A."/>
            <person name="Chillingworth T."/>
            <person name="Cronin A."/>
            <person name="Dowd L."/>
            <person name="Feltwell T."/>
            <person name="Hamlin N."/>
            <person name="Holroyd S."/>
            <person name="Jagels K."/>
            <person name="Moule S."/>
            <person name="Quail M.A."/>
            <person name="Rabbinowitsch E."/>
            <person name="Rutherford K.M."/>
            <person name="Thomson N.R."/>
            <person name="Unwin L."/>
            <person name="Whitehead S."/>
            <person name="Barrell B.G."/>
            <person name="Parkhill J."/>
        </authorList>
    </citation>
    <scope>NUCLEOTIDE SEQUENCE [LARGE SCALE GENOMIC DNA]</scope>
    <source>
        <strain>ATCC 700971 / NCTC 13129 / Biotype gravis</strain>
    </source>
</reference>
<comment type="function">
    <text evidence="1">Catalyzes the conversion of dethiobiotin (DTB) to biotin by the insertion of a sulfur atom into dethiobiotin via a radical-based mechanism.</text>
</comment>
<comment type="catalytic activity">
    <reaction evidence="1">
        <text>(4R,5S)-dethiobiotin + (sulfur carrier)-SH + 2 reduced [2Fe-2S]-[ferredoxin] + 2 S-adenosyl-L-methionine = (sulfur carrier)-H + biotin + 2 5'-deoxyadenosine + 2 L-methionine + 2 oxidized [2Fe-2S]-[ferredoxin]</text>
        <dbReference type="Rhea" id="RHEA:22060"/>
        <dbReference type="Rhea" id="RHEA-COMP:10000"/>
        <dbReference type="Rhea" id="RHEA-COMP:10001"/>
        <dbReference type="Rhea" id="RHEA-COMP:14737"/>
        <dbReference type="Rhea" id="RHEA-COMP:14739"/>
        <dbReference type="ChEBI" id="CHEBI:17319"/>
        <dbReference type="ChEBI" id="CHEBI:29917"/>
        <dbReference type="ChEBI" id="CHEBI:33737"/>
        <dbReference type="ChEBI" id="CHEBI:33738"/>
        <dbReference type="ChEBI" id="CHEBI:57586"/>
        <dbReference type="ChEBI" id="CHEBI:57844"/>
        <dbReference type="ChEBI" id="CHEBI:59789"/>
        <dbReference type="ChEBI" id="CHEBI:64428"/>
        <dbReference type="ChEBI" id="CHEBI:149473"/>
        <dbReference type="EC" id="2.8.1.6"/>
    </reaction>
</comment>
<comment type="cofactor">
    <cofactor evidence="1">
        <name>[4Fe-4S] cluster</name>
        <dbReference type="ChEBI" id="CHEBI:49883"/>
    </cofactor>
    <text evidence="1">Binds 1 [4Fe-4S] cluster. The cluster is coordinated with 3 cysteines and an exchangeable S-adenosyl-L-methionine.</text>
</comment>
<comment type="cofactor">
    <cofactor evidence="1">
        <name>[2Fe-2S] cluster</name>
        <dbReference type="ChEBI" id="CHEBI:190135"/>
    </cofactor>
    <text evidence="1">Binds 1 [2Fe-2S] cluster. The cluster is coordinated with 3 cysteines and 1 arginine.</text>
</comment>
<comment type="pathway">
    <text evidence="1">Cofactor biosynthesis; biotin biosynthesis; biotin from 7,8-diaminononanoate: step 2/2.</text>
</comment>
<comment type="subunit">
    <text evidence="1">Homodimer.</text>
</comment>
<comment type="similarity">
    <text evidence="1">Belongs to the radical SAM superfamily. Biotin synthase family.</text>
</comment>
<accession>Q6NHL3</accession>
<organism>
    <name type="scientific">Corynebacterium diphtheriae (strain ATCC 700971 / NCTC 13129 / Biotype gravis)</name>
    <dbReference type="NCBI Taxonomy" id="257309"/>
    <lineage>
        <taxon>Bacteria</taxon>
        <taxon>Bacillati</taxon>
        <taxon>Actinomycetota</taxon>
        <taxon>Actinomycetes</taxon>
        <taxon>Mycobacteriales</taxon>
        <taxon>Corynebacteriaceae</taxon>
        <taxon>Corynebacterium</taxon>
    </lineage>
</organism>
<dbReference type="EC" id="2.8.1.6" evidence="1"/>
<dbReference type="EMBL" id="BX248357">
    <property type="protein sequence ID" value="CAE49644.1"/>
    <property type="molecule type" value="Genomic_DNA"/>
</dbReference>
<dbReference type="SMR" id="Q6NHL3"/>
<dbReference type="STRING" id="257309.DIP1124"/>
<dbReference type="KEGG" id="cdi:DIP1124"/>
<dbReference type="HOGENOM" id="CLU_033172_2_1_11"/>
<dbReference type="UniPathway" id="UPA00078">
    <property type="reaction ID" value="UER00162"/>
</dbReference>
<dbReference type="Proteomes" id="UP000002198">
    <property type="component" value="Chromosome"/>
</dbReference>
<dbReference type="GO" id="GO:0051537">
    <property type="term" value="F:2 iron, 2 sulfur cluster binding"/>
    <property type="evidence" value="ECO:0007669"/>
    <property type="project" value="UniProtKB-KW"/>
</dbReference>
<dbReference type="GO" id="GO:0051539">
    <property type="term" value="F:4 iron, 4 sulfur cluster binding"/>
    <property type="evidence" value="ECO:0007669"/>
    <property type="project" value="UniProtKB-KW"/>
</dbReference>
<dbReference type="GO" id="GO:0004076">
    <property type="term" value="F:biotin synthase activity"/>
    <property type="evidence" value="ECO:0007669"/>
    <property type="project" value="UniProtKB-UniRule"/>
</dbReference>
<dbReference type="GO" id="GO:0005506">
    <property type="term" value="F:iron ion binding"/>
    <property type="evidence" value="ECO:0007669"/>
    <property type="project" value="UniProtKB-UniRule"/>
</dbReference>
<dbReference type="GO" id="GO:0009102">
    <property type="term" value="P:biotin biosynthetic process"/>
    <property type="evidence" value="ECO:0007669"/>
    <property type="project" value="UniProtKB-UniRule"/>
</dbReference>
<dbReference type="CDD" id="cd01335">
    <property type="entry name" value="Radical_SAM"/>
    <property type="match status" value="1"/>
</dbReference>
<dbReference type="FunFam" id="3.20.20.70:FF:000026">
    <property type="entry name" value="Biotin synthase"/>
    <property type="match status" value="1"/>
</dbReference>
<dbReference type="Gene3D" id="3.20.20.70">
    <property type="entry name" value="Aldolase class I"/>
    <property type="match status" value="1"/>
</dbReference>
<dbReference type="HAMAP" id="MF_01694">
    <property type="entry name" value="BioB"/>
    <property type="match status" value="1"/>
</dbReference>
<dbReference type="InterPro" id="IPR013785">
    <property type="entry name" value="Aldolase_TIM"/>
</dbReference>
<dbReference type="InterPro" id="IPR010722">
    <property type="entry name" value="BATS_dom"/>
</dbReference>
<dbReference type="InterPro" id="IPR002684">
    <property type="entry name" value="Biotin_synth/BioAB"/>
</dbReference>
<dbReference type="InterPro" id="IPR024177">
    <property type="entry name" value="Biotin_synthase"/>
</dbReference>
<dbReference type="InterPro" id="IPR006638">
    <property type="entry name" value="Elp3/MiaA/NifB-like_rSAM"/>
</dbReference>
<dbReference type="InterPro" id="IPR007197">
    <property type="entry name" value="rSAM"/>
</dbReference>
<dbReference type="NCBIfam" id="TIGR00433">
    <property type="entry name" value="bioB"/>
    <property type="match status" value="1"/>
</dbReference>
<dbReference type="PANTHER" id="PTHR22976">
    <property type="entry name" value="BIOTIN SYNTHASE"/>
    <property type="match status" value="1"/>
</dbReference>
<dbReference type="PANTHER" id="PTHR22976:SF2">
    <property type="entry name" value="BIOTIN SYNTHASE, MITOCHONDRIAL"/>
    <property type="match status" value="1"/>
</dbReference>
<dbReference type="Pfam" id="PF06968">
    <property type="entry name" value="BATS"/>
    <property type="match status" value="1"/>
</dbReference>
<dbReference type="Pfam" id="PF04055">
    <property type="entry name" value="Radical_SAM"/>
    <property type="match status" value="1"/>
</dbReference>
<dbReference type="PIRSF" id="PIRSF001619">
    <property type="entry name" value="Biotin_synth"/>
    <property type="match status" value="1"/>
</dbReference>
<dbReference type="SFLD" id="SFLDG01278">
    <property type="entry name" value="biotin_synthase_like"/>
    <property type="match status" value="1"/>
</dbReference>
<dbReference type="SFLD" id="SFLDS00029">
    <property type="entry name" value="Radical_SAM"/>
    <property type="match status" value="1"/>
</dbReference>
<dbReference type="SMART" id="SM00876">
    <property type="entry name" value="BATS"/>
    <property type="match status" value="1"/>
</dbReference>
<dbReference type="SMART" id="SM00729">
    <property type="entry name" value="Elp3"/>
    <property type="match status" value="1"/>
</dbReference>
<dbReference type="SUPFAM" id="SSF102114">
    <property type="entry name" value="Radical SAM enzymes"/>
    <property type="match status" value="1"/>
</dbReference>
<dbReference type="PROSITE" id="PS51918">
    <property type="entry name" value="RADICAL_SAM"/>
    <property type="match status" value="1"/>
</dbReference>
<feature type="chain" id="PRO_0000381326" description="Biotin synthase 2">
    <location>
        <begin position="1"/>
        <end position="330"/>
    </location>
</feature>
<feature type="domain" description="Radical SAM core" evidence="2">
    <location>
        <begin position="48"/>
        <end position="278"/>
    </location>
</feature>
<feature type="binding site" evidence="1">
    <location>
        <position position="66"/>
    </location>
    <ligand>
        <name>[4Fe-4S] cluster</name>
        <dbReference type="ChEBI" id="CHEBI:49883"/>
        <note>4Fe-4S-S-AdoMet</note>
    </ligand>
</feature>
<feature type="binding site" evidence="1">
    <location>
        <position position="70"/>
    </location>
    <ligand>
        <name>[4Fe-4S] cluster</name>
        <dbReference type="ChEBI" id="CHEBI:49883"/>
        <note>4Fe-4S-S-AdoMet</note>
    </ligand>
</feature>
<feature type="binding site" evidence="1">
    <location>
        <position position="73"/>
    </location>
    <ligand>
        <name>[4Fe-4S] cluster</name>
        <dbReference type="ChEBI" id="CHEBI:49883"/>
        <note>4Fe-4S-S-AdoMet</note>
    </ligand>
</feature>
<feature type="binding site" evidence="1">
    <location>
        <position position="111"/>
    </location>
    <ligand>
        <name>[2Fe-2S] cluster</name>
        <dbReference type="ChEBI" id="CHEBI:190135"/>
    </ligand>
</feature>
<feature type="binding site" evidence="1">
    <location>
        <position position="143"/>
    </location>
    <ligand>
        <name>[2Fe-2S] cluster</name>
        <dbReference type="ChEBI" id="CHEBI:190135"/>
    </ligand>
</feature>
<feature type="binding site" evidence="1">
    <location>
        <position position="203"/>
    </location>
    <ligand>
        <name>[2Fe-2S] cluster</name>
        <dbReference type="ChEBI" id="CHEBI:190135"/>
    </ligand>
</feature>
<feature type="binding site" evidence="1">
    <location>
        <position position="273"/>
    </location>
    <ligand>
        <name>[2Fe-2S] cluster</name>
        <dbReference type="ChEBI" id="CHEBI:190135"/>
    </ligand>
</feature>
<evidence type="ECO:0000255" key="1">
    <source>
        <dbReference type="HAMAP-Rule" id="MF_01694"/>
    </source>
</evidence>
<evidence type="ECO:0000255" key="2">
    <source>
        <dbReference type="PROSITE-ProRule" id="PRU01266"/>
    </source>
</evidence>
<sequence>MTATLNTVQDLEASVLAGTAITRDEALSLIDAPLDELSAAADRIRAQMCGDGFDMCSIINAKSGRCPENCTFCAQSIRYPTISVDSYPLITADELVRQAQENKDKGVIRFSIVTSGRKLRRDEVRHICEGVRRIKQEVGIEVCISAGLLSAEDFQALHDAGISRVHCNLETSRAYFPSICISHTFDDKIATLQAARDEGMSLCSGGILGLGESMEDRIDMALSARELGVNSFPVNVLVAIEGTPLAGTEQLRPEEVQRCVAIFRFILPQAAIRLAGGRELLGDDGKACFQSGANSAISGDMLTTTGTTIASDMALVKDLGYTVTLDHSHS</sequence>
<protein>
    <recommendedName>
        <fullName evidence="1">Biotin synthase 2</fullName>
        <ecNumber evidence="1">2.8.1.6</ecNumber>
    </recommendedName>
</protein>
<keyword id="KW-0001">2Fe-2S</keyword>
<keyword id="KW-0004">4Fe-4S</keyword>
<keyword id="KW-0093">Biotin biosynthesis</keyword>
<keyword id="KW-0408">Iron</keyword>
<keyword id="KW-0411">Iron-sulfur</keyword>
<keyword id="KW-0479">Metal-binding</keyword>
<keyword id="KW-1185">Reference proteome</keyword>
<keyword id="KW-0949">S-adenosyl-L-methionine</keyword>
<keyword id="KW-0808">Transferase</keyword>